<feature type="chain" id="PRO_0000176334" description="Elongation factor 4">
    <location>
        <begin position="1"/>
        <end position="600"/>
    </location>
</feature>
<feature type="domain" description="tr-type G">
    <location>
        <begin position="5"/>
        <end position="187"/>
    </location>
</feature>
<feature type="binding site" evidence="1">
    <location>
        <begin position="17"/>
        <end position="22"/>
    </location>
    <ligand>
        <name>GTP</name>
        <dbReference type="ChEBI" id="CHEBI:37565"/>
    </ligand>
</feature>
<feature type="binding site" evidence="1">
    <location>
        <begin position="134"/>
        <end position="137"/>
    </location>
    <ligand>
        <name>GTP</name>
        <dbReference type="ChEBI" id="CHEBI:37565"/>
    </ligand>
</feature>
<organism>
    <name type="scientific">Rickettsia prowazekii (strain Madrid E)</name>
    <dbReference type="NCBI Taxonomy" id="272947"/>
    <lineage>
        <taxon>Bacteria</taxon>
        <taxon>Pseudomonadati</taxon>
        <taxon>Pseudomonadota</taxon>
        <taxon>Alphaproteobacteria</taxon>
        <taxon>Rickettsiales</taxon>
        <taxon>Rickettsiaceae</taxon>
        <taxon>Rickettsieae</taxon>
        <taxon>Rickettsia</taxon>
        <taxon>typhus group</taxon>
    </lineage>
</organism>
<protein>
    <recommendedName>
        <fullName evidence="1">Elongation factor 4</fullName>
        <shortName evidence="1">EF-4</shortName>
        <ecNumber evidence="1">3.6.5.n1</ecNumber>
    </recommendedName>
    <alternativeName>
        <fullName evidence="1">Ribosomal back-translocase LepA</fullName>
    </alternativeName>
</protein>
<proteinExistence type="inferred from homology"/>
<accession>Q9ZDQ1</accession>
<keyword id="KW-0997">Cell inner membrane</keyword>
<keyword id="KW-1003">Cell membrane</keyword>
<keyword id="KW-0342">GTP-binding</keyword>
<keyword id="KW-0378">Hydrolase</keyword>
<keyword id="KW-0472">Membrane</keyword>
<keyword id="KW-0547">Nucleotide-binding</keyword>
<keyword id="KW-0648">Protein biosynthesis</keyword>
<keyword id="KW-1185">Reference proteome</keyword>
<evidence type="ECO:0000255" key="1">
    <source>
        <dbReference type="HAMAP-Rule" id="MF_00071"/>
    </source>
</evidence>
<gene>
    <name evidence="1" type="primary">lepA</name>
    <name type="ordered locus">RP275</name>
</gene>
<name>LEPA_RICPR</name>
<comment type="function">
    <text evidence="1">Required for accurate and efficient protein synthesis under certain stress conditions. May act as a fidelity factor of the translation reaction, by catalyzing a one-codon backward translocation of tRNAs on improperly translocated ribosomes. Back-translocation proceeds from a post-translocation (POST) complex to a pre-translocation (PRE) complex, thus giving elongation factor G a second chance to translocate the tRNAs correctly. Binds to ribosomes in a GTP-dependent manner.</text>
</comment>
<comment type="catalytic activity">
    <reaction evidence="1">
        <text>GTP + H2O = GDP + phosphate + H(+)</text>
        <dbReference type="Rhea" id="RHEA:19669"/>
        <dbReference type="ChEBI" id="CHEBI:15377"/>
        <dbReference type="ChEBI" id="CHEBI:15378"/>
        <dbReference type="ChEBI" id="CHEBI:37565"/>
        <dbReference type="ChEBI" id="CHEBI:43474"/>
        <dbReference type="ChEBI" id="CHEBI:58189"/>
        <dbReference type="EC" id="3.6.5.n1"/>
    </reaction>
</comment>
<comment type="subcellular location">
    <subcellularLocation>
        <location evidence="1">Cell inner membrane</location>
        <topology evidence="1">Peripheral membrane protein</topology>
        <orientation evidence="1">Cytoplasmic side</orientation>
    </subcellularLocation>
</comment>
<comment type="similarity">
    <text evidence="1">Belongs to the TRAFAC class translation factor GTPase superfamily. Classic translation factor GTPase family. LepA subfamily.</text>
</comment>
<dbReference type="EC" id="3.6.5.n1" evidence="1"/>
<dbReference type="EMBL" id="AJ235271">
    <property type="protein sequence ID" value="CAA14737.1"/>
    <property type="molecule type" value="Genomic_DNA"/>
</dbReference>
<dbReference type="PIR" id="G71682">
    <property type="entry name" value="G71682"/>
</dbReference>
<dbReference type="RefSeq" id="NP_220660.1">
    <property type="nucleotide sequence ID" value="NC_000963.1"/>
</dbReference>
<dbReference type="RefSeq" id="WP_004599376.1">
    <property type="nucleotide sequence ID" value="NC_000963.1"/>
</dbReference>
<dbReference type="SMR" id="Q9ZDQ1"/>
<dbReference type="STRING" id="272947.gene:17555356"/>
<dbReference type="EnsemblBacteria" id="CAA14737">
    <property type="protein sequence ID" value="CAA14737"/>
    <property type="gene ID" value="CAA14737"/>
</dbReference>
<dbReference type="GeneID" id="57569403"/>
<dbReference type="KEGG" id="rpr:RP275"/>
<dbReference type="PATRIC" id="fig|272947.5.peg.282"/>
<dbReference type="eggNOG" id="COG0481">
    <property type="taxonomic scope" value="Bacteria"/>
</dbReference>
<dbReference type="HOGENOM" id="CLU_009995_3_3_5"/>
<dbReference type="OrthoDB" id="9802948at2"/>
<dbReference type="Proteomes" id="UP000002480">
    <property type="component" value="Chromosome"/>
</dbReference>
<dbReference type="GO" id="GO:0005886">
    <property type="term" value="C:plasma membrane"/>
    <property type="evidence" value="ECO:0007669"/>
    <property type="project" value="UniProtKB-SubCell"/>
</dbReference>
<dbReference type="GO" id="GO:0005525">
    <property type="term" value="F:GTP binding"/>
    <property type="evidence" value="ECO:0007669"/>
    <property type="project" value="UniProtKB-UniRule"/>
</dbReference>
<dbReference type="GO" id="GO:0003924">
    <property type="term" value="F:GTPase activity"/>
    <property type="evidence" value="ECO:0007669"/>
    <property type="project" value="UniProtKB-UniRule"/>
</dbReference>
<dbReference type="GO" id="GO:0097216">
    <property type="term" value="F:guanosine tetraphosphate binding"/>
    <property type="evidence" value="ECO:0007669"/>
    <property type="project" value="UniProtKB-ARBA"/>
</dbReference>
<dbReference type="GO" id="GO:0043022">
    <property type="term" value="F:ribosome binding"/>
    <property type="evidence" value="ECO:0007669"/>
    <property type="project" value="UniProtKB-UniRule"/>
</dbReference>
<dbReference type="GO" id="GO:0003746">
    <property type="term" value="F:translation elongation factor activity"/>
    <property type="evidence" value="ECO:0007669"/>
    <property type="project" value="UniProtKB-UniRule"/>
</dbReference>
<dbReference type="GO" id="GO:0045727">
    <property type="term" value="P:positive regulation of translation"/>
    <property type="evidence" value="ECO:0007669"/>
    <property type="project" value="UniProtKB-UniRule"/>
</dbReference>
<dbReference type="CDD" id="cd03699">
    <property type="entry name" value="EF4_II"/>
    <property type="match status" value="1"/>
</dbReference>
<dbReference type="CDD" id="cd16260">
    <property type="entry name" value="EF4_III"/>
    <property type="match status" value="1"/>
</dbReference>
<dbReference type="CDD" id="cd01890">
    <property type="entry name" value="LepA"/>
    <property type="match status" value="1"/>
</dbReference>
<dbReference type="CDD" id="cd03709">
    <property type="entry name" value="lepA_C"/>
    <property type="match status" value="1"/>
</dbReference>
<dbReference type="FunFam" id="3.40.50.300:FF:000078">
    <property type="entry name" value="Elongation factor 4"/>
    <property type="match status" value="1"/>
</dbReference>
<dbReference type="FunFam" id="2.40.30.10:FF:000015">
    <property type="entry name" value="Translation factor GUF1, mitochondrial"/>
    <property type="match status" value="1"/>
</dbReference>
<dbReference type="FunFam" id="3.30.70.240:FF:000007">
    <property type="entry name" value="Translation factor GUF1, mitochondrial"/>
    <property type="match status" value="1"/>
</dbReference>
<dbReference type="FunFam" id="3.30.70.2570:FF:000001">
    <property type="entry name" value="Translation factor GUF1, mitochondrial"/>
    <property type="match status" value="1"/>
</dbReference>
<dbReference type="FunFam" id="3.30.70.870:FF:000004">
    <property type="entry name" value="Translation factor GUF1, mitochondrial"/>
    <property type="match status" value="1"/>
</dbReference>
<dbReference type="Gene3D" id="3.30.70.240">
    <property type="match status" value="1"/>
</dbReference>
<dbReference type="Gene3D" id="3.30.70.2570">
    <property type="entry name" value="Elongation factor 4, C-terminal domain"/>
    <property type="match status" value="1"/>
</dbReference>
<dbReference type="Gene3D" id="3.30.70.870">
    <property type="entry name" value="Elongation Factor G (Translational Gtpase), domain 3"/>
    <property type="match status" value="1"/>
</dbReference>
<dbReference type="Gene3D" id="3.40.50.300">
    <property type="entry name" value="P-loop containing nucleotide triphosphate hydrolases"/>
    <property type="match status" value="1"/>
</dbReference>
<dbReference type="Gene3D" id="2.40.30.10">
    <property type="entry name" value="Translation factors"/>
    <property type="match status" value="1"/>
</dbReference>
<dbReference type="HAMAP" id="MF_00071">
    <property type="entry name" value="LepA"/>
    <property type="match status" value="1"/>
</dbReference>
<dbReference type="InterPro" id="IPR006297">
    <property type="entry name" value="EF-4"/>
</dbReference>
<dbReference type="InterPro" id="IPR035647">
    <property type="entry name" value="EFG_III/V"/>
</dbReference>
<dbReference type="InterPro" id="IPR000640">
    <property type="entry name" value="EFG_V-like"/>
</dbReference>
<dbReference type="InterPro" id="IPR004161">
    <property type="entry name" value="EFTu-like_2"/>
</dbReference>
<dbReference type="InterPro" id="IPR031157">
    <property type="entry name" value="G_TR_CS"/>
</dbReference>
<dbReference type="InterPro" id="IPR038363">
    <property type="entry name" value="LepA_C_sf"/>
</dbReference>
<dbReference type="InterPro" id="IPR013842">
    <property type="entry name" value="LepA_CTD"/>
</dbReference>
<dbReference type="InterPro" id="IPR035654">
    <property type="entry name" value="LepA_IV"/>
</dbReference>
<dbReference type="InterPro" id="IPR027417">
    <property type="entry name" value="P-loop_NTPase"/>
</dbReference>
<dbReference type="InterPro" id="IPR005225">
    <property type="entry name" value="Small_GTP-bd"/>
</dbReference>
<dbReference type="InterPro" id="IPR000795">
    <property type="entry name" value="T_Tr_GTP-bd_dom"/>
</dbReference>
<dbReference type="NCBIfam" id="TIGR01393">
    <property type="entry name" value="lepA"/>
    <property type="match status" value="1"/>
</dbReference>
<dbReference type="NCBIfam" id="TIGR00231">
    <property type="entry name" value="small_GTP"/>
    <property type="match status" value="1"/>
</dbReference>
<dbReference type="PANTHER" id="PTHR43512:SF4">
    <property type="entry name" value="TRANSLATION FACTOR GUF1 HOMOLOG, CHLOROPLASTIC"/>
    <property type="match status" value="1"/>
</dbReference>
<dbReference type="PANTHER" id="PTHR43512">
    <property type="entry name" value="TRANSLATION FACTOR GUF1-RELATED"/>
    <property type="match status" value="1"/>
</dbReference>
<dbReference type="Pfam" id="PF00679">
    <property type="entry name" value="EFG_C"/>
    <property type="match status" value="1"/>
</dbReference>
<dbReference type="Pfam" id="PF00009">
    <property type="entry name" value="GTP_EFTU"/>
    <property type="match status" value="1"/>
</dbReference>
<dbReference type="Pfam" id="PF03144">
    <property type="entry name" value="GTP_EFTU_D2"/>
    <property type="match status" value="1"/>
</dbReference>
<dbReference type="Pfam" id="PF06421">
    <property type="entry name" value="LepA_C"/>
    <property type="match status" value="1"/>
</dbReference>
<dbReference type="PRINTS" id="PR00315">
    <property type="entry name" value="ELONGATNFCT"/>
</dbReference>
<dbReference type="SUPFAM" id="SSF54980">
    <property type="entry name" value="EF-G C-terminal domain-like"/>
    <property type="match status" value="2"/>
</dbReference>
<dbReference type="SUPFAM" id="SSF52540">
    <property type="entry name" value="P-loop containing nucleoside triphosphate hydrolases"/>
    <property type="match status" value="1"/>
</dbReference>
<dbReference type="PROSITE" id="PS00301">
    <property type="entry name" value="G_TR_1"/>
    <property type="match status" value="1"/>
</dbReference>
<dbReference type="PROSITE" id="PS51722">
    <property type="entry name" value="G_TR_2"/>
    <property type="match status" value="1"/>
</dbReference>
<reference key="1">
    <citation type="journal article" date="1998" name="Nature">
        <title>The genome sequence of Rickettsia prowazekii and the origin of mitochondria.</title>
        <authorList>
            <person name="Andersson S.G.E."/>
            <person name="Zomorodipour A."/>
            <person name="Andersson J.O."/>
            <person name="Sicheritz-Ponten T."/>
            <person name="Alsmark U.C.M."/>
            <person name="Podowski R.M."/>
            <person name="Naeslund A.K."/>
            <person name="Eriksson A.-S."/>
            <person name="Winkler H.H."/>
            <person name="Kurland C.G."/>
        </authorList>
    </citation>
    <scope>NUCLEOTIDE SEQUENCE [LARGE SCALE GENOMIC DNA]</scope>
    <source>
        <strain>Madrid E</strain>
    </source>
</reference>
<sequence>MNNQKYIRNFSIIAHIDHGKSTLADRLIEYCGGLNAREMSQQVLDSMDIERERGITIKAQTVRLVYKAKNGNTYYLNLMDTPGHVDFAYEVSRSLAACEGSLLVVDSTQGVEAQTLANVYQAIANDHLIVPVLNKIDLAASEPDYVKTQIEDIIGIDASEAVLISAKNGIGIDSVLEAIINKLPAPKESSTDILKALLVDSWYDPYLGVVILVRIIDGALRKNMRVKMMRTNSVYTVEHVGFFTPKKHISDVLYAGEIGFFTASIKRVSDCKVGDTITDEKKSCEQALPGFKPNIPVVFCGFYPTDSAEFEHLKDSLAKLRLNDASFEYEMESSSALGVGFRCGFLGLLHLEIIQERLSREFDLDLITTAPSVIYKINMLDGQNLEIHNPADLPDLQKIASMEEPWIKATIIVPDEFIGTVLSLCTEKRGIQLDHSYISNRAKIVYKLPLNEIVYDFYDRLKSCSKGYASFEWQMDVYELSDLVNLRILVNGEVVDALSTIVHRSRAEQRGRALCIRLKDLIPRQQIDIAIQASVGSRIIARETIKALRKDVLSKCYGGDISRKRKLLEKQKAGKKKMRQYGNIEIPQSAFIAALQIGGE</sequence>